<sequence>MYYQNVSVGQLIKRVSRFTVEIDLNGTVEPVHMNNTGRNKEILIPGSLASVRYVDNPNRKTHYDLLAVQRQGRWINIDSLAPNHVAKECLEAGTLKLPGLALPYAVHPESTWRDSRLDFAGKAADGQSWFVETKGVTLANGTLAAFPDAPTTRAVKHVHTLTMAQAEGYQAFLLFIVQLPDIRQMTIYRDRFPELVTAITTAKQNGVRVLAYDTMTGPDQITLGNEIPFDEHLPFSEINLNSL</sequence>
<comment type="similarity">
    <text evidence="1">Belongs to the SfsA family.</text>
</comment>
<name>SFSA_LACCB</name>
<organism>
    <name type="scientific">Lacticaseibacillus casei (strain BL23)</name>
    <name type="common">Lactobacillus casei</name>
    <dbReference type="NCBI Taxonomy" id="543734"/>
    <lineage>
        <taxon>Bacteria</taxon>
        <taxon>Bacillati</taxon>
        <taxon>Bacillota</taxon>
        <taxon>Bacilli</taxon>
        <taxon>Lactobacillales</taxon>
        <taxon>Lactobacillaceae</taxon>
        <taxon>Lacticaseibacillus</taxon>
    </lineage>
</organism>
<accession>B3W9M6</accession>
<feature type="chain" id="PRO_1000093575" description="Sugar fermentation stimulation protein homolog">
    <location>
        <begin position="1"/>
        <end position="243"/>
    </location>
</feature>
<evidence type="ECO:0000255" key="1">
    <source>
        <dbReference type="HAMAP-Rule" id="MF_00095"/>
    </source>
</evidence>
<protein>
    <recommendedName>
        <fullName evidence="1">Sugar fermentation stimulation protein homolog</fullName>
    </recommendedName>
</protein>
<proteinExistence type="inferred from homology"/>
<gene>
    <name evidence="1" type="primary">sfsA</name>
    <name type="ordered locus">LCABL_23280</name>
</gene>
<dbReference type="EMBL" id="FM177140">
    <property type="protein sequence ID" value="CAQ67395.1"/>
    <property type="molecule type" value="Genomic_DNA"/>
</dbReference>
<dbReference type="SMR" id="B3W9M6"/>
<dbReference type="KEGG" id="lcb:LCABL_23280"/>
<dbReference type="HOGENOM" id="CLU_052299_1_0_9"/>
<dbReference type="GO" id="GO:0003677">
    <property type="term" value="F:DNA binding"/>
    <property type="evidence" value="ECO:0007669"/>
    <property type="project" value="InterPro"/>
</dbReference>
<dbReference type="CDD" id="cd22359">
    <property type="entry name" value="SfsA-like_bacterial"/>
    <property type="match status" value="1"/>
</dbReference>
<dbReference type="Gene3D" id="2.40.50.580">
    <property type="match status" value="1"/>
</dbReference>
<dbReference type="Gene3D" id="3.40.1350.60">
    <property type="match status" value="1"/>
</dbReference>
<dbReference type="HAMAP" id="MF_00095">
    <property type="entry name" value="SfsA"/>
    <property type="match status" value="1"/>
</dbReference>
<dbReference type="InterPro" id="IPR005224">
    <property type="entry name" value="SfsA"/>
</dbReference>
<dbReference type="InterPro" id="IPR040452">
    <property type="entry name" value="SfsA_C"/>
</dbReference>
<dbReference type="InterPro" id="IPR041465">
    <property type="entry name" value="SfsA_N"/>
</dbReference>
<dbReference type="NCBIfam" id="TIGR00230">
    <property type="entry name" value="sfsA"/>
    <property type="match status" value="1"/>
</dbReference>
<dbReference type="PANTHER" id="PTHR30545">
    <property type="entry name" value="SUGAR FERMENTATION STIMULATION PROTEIN A"/>
    <property type="match status" value="1"/>
</dbReference>
<dbReference type="PANTHER" id="PTHR30545:SF2">
    <property type="entry name" value="SUGAR FERMENTATION STIMULATION PROTEIN A"/>
    <property type="match status" value="1"/>
</dbReference>
<dbReference type="Pfam" id="PF03749">
    <property type="entry name" value="SfsA"/>
    <property type="match status" value="1"/>
</dbReference>
<dbReference type="Pfam" id="PF17746">
    <property type="entry name" value="SfsA_N"/>
    <property type="match status" value="1"/>
</dbReference>
<reference key="1">
    <citation type="submission" date="2008-06" db="EMBL/GenBank/DDBJ databases">
        <title>Lactobacillus casei BL23 complete genome sequence.</title>
        <authorList>
            <person name="Maze A."/>
            <person name="Boel G."/>
            <person name="Bourand A."/>
            <person name="Loux V."/>
            <person name="Gibrat J.F."/>
            <person name="Zuniga M."/>
            <person name="Hartke A."/>
            <person name="Deutscher J."/>
        </authorList>
    </citation>
    <scope>NUCLEOTIDE SEQUENCE [LARGE SCALE GENOMIC DNA]</scope>
    <source>
        <strain>BL23</strain>
    </source>
</reference>